<protein>
    <recommendedName>
        <fullName evidence="1">Nucleoprotein</fullName>
    </recommendedName>
    <alternativeName>
        <fullName evidence="1">Nucleocapsid protein</fullName>
        <shortName evidence="1">Protein N</shortName>
    </alternativeName>
</protein>
<name>NCAP_I83A4</name>
<organismHost>
    <name type="scientific">Aves</name>
    <dbReference type="NCBI Taxonomy" id="8782"/>
</organismHost>
<keyword id="KW-0167">Capsid protein</keyword>
<keyword id="KW-1139">Helical capsid protein</keyword>
<keyword id="KW-1048">Host nucleus</keyword>
<keyword id="KW-0945">Host-virus interaction</keyword>
<keyword id="KW-0687">Ribonucleoprotein</keyword>
<keyword id="KW-0694">RNA-binding</keyword>
<keyword id="KW-0543">Viral nucleoprotein</keyword>
<keyword id="KW-1163">Viral penetration into host nucleus</keyword>
<keyword id="KW-0946">Virion</keyword>
<keyword id="KW-1160">Virus entry into host cell</keyword>
<reference key="1">
    <citation type="journal article" date="2006" name="Science">
        <title>Large-scale sequence analysis of avian influenza isolates.</title>
        <authorList>
            <person name="Obenauer J.C."/>
            <person name="Denson J."/>
            <person name="Mehta P.K."/>
            <person name="Su X."/>
            <person name="Mukatira S."/>
            <person name="Finkelstein D.B."/>
            <person name="Xu X."/>
            <person name="Wang J."/>
            <person name="Ma J."/>
            <person name="Fan Y."/>
            <person name="Rakestraw K.M."/>
            <person name="Webster R.G."/>
            <person name="Hoffmann E."/>
            <person name="Krauss S."/>
            <person name="Zheng J."/>
            <person name="Zhang Z."/>
            <person name="Naeve C.W."/>
        </authorList>
    </citation>
    <scope>NUCLEOTIDE SEQUENCE [GENOMIC RNA]</scope>
</reference>
<dbReference type="EMBL" id="CY015092">
    <property type="protein sequence ID" value="ABI85121.1"/>
    <property type="molecule type" value="Genomic_RNA"/>
</dbReference>
<dbReference type="SMR" id="Q0A2G1"/>
<dbReference type="PRO" id="PR:Q0A2G1"/>
<dbReference type="Proteomes" id="UP000008583">
    <property type="component" value="Genome"/>
</dbReference>
<dbReference type="GO" id="GO:0019029">
    <property type="term" value="C:helical viral capsid"/>
    <property type="evidence" value="ECO:0007669"/>
    <property type="project" value="UniProtKB-UniRule"/>
</dbReference>
<dbReference type="GO" id="GO:0043657">
    <property type="term" value="C:host cell"/>
    <property type="evidence" value="ECO:0007669"/>
    <property type="project" value="GOC"/>
</dbReference>
<dbReference type="GO" id="GO:0042025">
    <property type="term" value="C:host cell nucleus"/>
    <property type="evidence" value="ECO:0007669"/>
    <property type="project" value="UniProtKB-SubCell"/>
</dbReference>
<dbReference type="GO" id="GO:1990904">
    <property type="term" value="C:ribonucleoprotein complex"/>
    <property type="evidence" value="ECO:0007669"/>
    <property type="project" value="UniProtKB-KW"/>
</dbReference>
<dbReference type="GO" id="GO:0019013">
    <property type="term" value="C:viral nucleocapsid"/>
    <property type="evidence" value="ECO:0007669"/>
    <property type="project" value="UniProtKB-UniRule"/>
</dbReference>
<dbReference type="GO" id="GO:0003723">
    <property type="term" value="F:RNA binding"/>
    <property type="evidence" value="ECO:0007669"/>
    <property type="project" value="UniProtKB-UniRule"/>
</dbReference>
<dbReference type="GO" id="GO:0005198">
    <property type="term" value="F:structural molecule activity"/>
    <property type="evidence" value="ECO:0007669"/>
    <property type="project" value="UniProtKB-UniRule"/>
</dbReference>
<dbReference type="GO" id="GO:0046718">
    <property type="term" value="P:symbiont entry into host cell"/>
    <property type="evidence" value="ECO:0007669"/>
    <property type="project" value="UniProtKB-KW"/>
</dbReference>
<dbReference type="GO" id="GO:0075732">
    <property type="term" value="P:viral penetration into host nucleus"/>
    <property type="evidence" value="ECO:0007669"/>
    <property type="project" value="UniProtKB-UniRule"/>
</dbReference>
<dbReference type="HAMAP" id="MF_04070">
    <property type="entry name" value="INFV_NCAP"/>
    <property type="match status" value="1"/>
</dbReference>
<dbReference type="InterPro" id="IPR002141">
    <property type="entry name" value="Flu_NP"/>
</dbReference>
<dbReference type="Pfam" id="PF00506">
    <property type="entry name" value="Flu_NP"/>
    <property type="match status" value="1"/>
</dbReference>
<dbReference type="SUPFAM" id="SSF161003">
    <property type="entry name" value="flu NP-like"/>
    <property type="match status" value="1"/>
</dbReference>
<evidence type="ECO:0000255" key="1">
    <source>
        <dbReference type="HAMAP-Rule" id="MF_04070"/>
    </source>
</evidence>
<evidence type="ECO:0000256" key="2">
    <source>
        <dbReference type="SAM" id="MobiDB-lite"/>
    </source>
</evidence>
<organism>
    <name type="scientific">Influenza A virus (strain A/Turkey/Ireland/1378/1983 H5N8)</name>
    <dbReference type="NCBI Taxonomy" id="380285"/>
    <lineage>
        <taxon>Viruses</taxon>
        <taxon>Riboviria</taxon>
        <taxon>Orthornavirae</taxon>
        <taxon>Negarnaviricota</taxon>
        <taxon>Polyploviricotina</taxon>
        <taxon>Insthoviricetes</taxon>
        <taxon>Articulavirales</taxon>
        <taxon>Orthomyxoviridae</taxon>
        <taxon>Alphainfluenzavirus</taxon>
        <taxon>Alphainfluenzavirus influenzae</taxon>
        <taxon>Influenza A virus</taxon>
    </lineage>
</organism>
<accession>Q0A2G1</accession>
<comment type="function">
    <text evidence="1">Encapsidates the negative strand viral RNA, protecting it from nucleases. The encapsidated genomic RNA is termed the ribonucleoprotein (RNP) and serves as template for transcription and replication. The RNP needs to be localized in the host nucleus to start an infectious cycle, but is too large to diffuse through the nuclear pore complex. NP comprises at least 2 nuclear localization signals that are responsible for the active RNP import into the nucleus through cellular importin alpha/beta pathway. Later in the infection, nclear export of RNPs are mediated through viral proteins NEP interacting with M1 which binds nucleoproteins. It is possible that nucleoprotein binds directly host exportin-1/XPO1 and plays an active role in RNPs nuclear export. M1 interaction with RNP seems to hide nucleoprotein's nuclear localization signals. Soon after a virion infects a new cell, M1 dissociates from the RNP under acidification of the virion driven by M2 protein. Dissociation of M1 from RNP unmasks nucleoprotein's nuclear localization signals, targeting the RNP to the nucleus.</text>
</comment>
<comment type="subunit">
    <text evidence="1">Homomultimerizes to form the nucleocapsid. May bind host exportin-1/XPO1. Binds to viral genomic RNA. Protein-RNA contacts are mediated by a combination of electrostatic interactions between positively charged residues and the phosphate backbone and planar interactions between aromatic side chains and bases.</text>
</comment>
<comment type="subcellular location">
    <subcellularLocation>
        <location evidence="1">Virion</location>
    </subcellularLocation>
    <subcellularLocation>
        <location evidence="1">Host nucleus</location>
    </subcellularLocation>
</comment>
<comment type="PTM">
    <text evidence="1">Late in virus-infected cells, may be cleaved from a 56-kDa protein to a 53-kDa protein by a cellular caspase. This cleavage might be a marker for the onset of apoptosis in infected cells or have a specific function in virus host interaction.</text>
</comment>
<comment type="similarity">
    <text evidence="1">Belongs to the influenza viruses nucleoprotein family.</text>
</comment>
<sequence length="498" mass="56284">MASQGTKRSYEQMETGGERQNATEIRASVGRMVGGIGRFYIQMCTELKLSDYEGRLIQNSITIERMVLSAFDERRNKYLEEHPSAGKDPKKTGGPIYRRRDGKWMRELILYDKEEIRRIWRQANNGEDATAGLTHLMIWHSNLNDATYQRTRALVRTGMDPRMCSLMQGSTLPRRSGAAGAAVKGIGTMVMELIRMIKRGINDRNFWRGENGRRTRVAYERMCNILKGKFQTAAQRAMMDQVRESRNPGNAEIEDLIFLARSALILRGSVAHKSCLPACVYGLAVASGYDFEREGYSLVGIDPFRLLQNSQVFSLIRPNENPAHKSQLVWMACHSAAFEDLRVSSFIRGTRVVPRGQLSTRGVQIASNENMETMDSSTLELRSRYWAIRTRSGGNTNQQRASAGQISVQPTFSVQRNLPFERATIMAAFTGNTEGRTSDMRTEIIRMMESARPEDVSFQGRGVFELSDEKATNPIVPSFDMSNEGSYFFGDNAEEYDN</sequence>
<gene>
    <name evidence="1" type="primary">NP</name>
</gene>
<proteinExistence type="inferred from homology"/>
<feature type="chain" id="PRO_0000402429" description="Nucleoprotein">
    <location>
        <begin position="1"/>
        <end position="498"/>
    </location>
</feature>
<feature type="region of interest" description="Disordered" evidence="2">
    <location>
        <begin position="1"/>
        <end position="21"/>
    </location>
</feature>
<feature type="short sequence motif" description="Unconventional nuclear localization signal" evidence="1">
    <location>
        <begin position="1"/>
        <end position="18"/>
    </location>
</feature>
<feature type="short sequence motif" description="Bipartite nuclear localization signal" evidence="1">
    <location>
        <begin position="198"/>
        <end position="216"/>
    </location>
</feature>